<evidence type="ECO:0000255" key="1">
    <source>
        <dbReference type="HAMAP-Rule" id="MF_01562"/>
    </source>
</evidence>
<dbReference type="EMBL" id="BX294144">
    <property type="protein sequence ID" value="CAD74771.1"/>
    <property type="molecule type" value="Genomic_DNA"/>
</dbReference>
<dbReference type="RefSeq" id="NP_867226.1">
    <property type="nucleotide sequence ID" value="NC_005027.1"/>
</dbReference>
<dbReference type="SMR" id="Q7UQD2"/>
<dbReference type="STRING" id="243090.RB6389"/>
<dbReference type="EnsemblBacteria" id="CAD74771">
    <property type="protein sequence ID" value="CAD74771"/>
    <property type="gene ID" value="RB6389"/>
</dbReference>
<dbReference type="KEGG" id="rba:RB6389"/>
<dbReference type="PATRIC" id="fig|243090.15.peg.3088"/>
<dbReference type="eggNOG" id="COG4864">
    <property type="taxonomic scope" value="Bacteria"/>
</dbReference>
<dbReference type="HOGENOM" id="CLU_836378_0_0_0"/>
<dbReference type="InParanoid" id="Q7UQD2"/>
<dbReference type="OrthoDB" id="9808365at2"/>
<dbReference type="Proteomes" id="UP000001025">
    <property type="component" value="Chromosome"/>
</dbReference>
<dbReference type="GO" id="GO:0045121">
    <property type="term" value="C:membrane raft"/>
    <property type="evidence" value="ECO:0007669"/>
    <property type="project" value="UniProtKB-SubCell"/>
</dbReference>
<dbReference type="GO" id="GO:0005886">
    <property type="term" value="C:plasma membrane"/>
    <property type="evidence" value="ECO:0007669"/>
    <property type="project" value="UniProtKB-SubCell"/>
</dbReference>
<dbReference type="HAMAP" id="MF_01562">
    <property type="entry name" value="FloA"/>
    <property type="match status" value="1"/>
</dbReference>
<dbReference type="InterPro" id="IPR022853">
    <property type="entry name" value="FloA"/>
</dbReference>
<dbReference type="NCBIfam" id="NF010186">
    <property type="entry name" value="PRK13665.1"/>
    <property type="match status" value="1"/>
</dbReference>
<dbReference type="Pfam" id="PF12127">
    <property type="entry name" value="FloA"/>
    <property type="match status" value="1"/>
</dbReference>
<protein>
    <recommendedName>
        <fullName evidence="1">Flotillin-like protein FloA 2</fullName>
    </recommendedName>
</protein>
<feature type="chain" id="PRO_0000232557" description="Flotillin-like protein FloA 2">
    <location>
        <begin position="1"/>
        <end position="362"/>
    </location>
</feature>
<feature type="transmembrane region" description="Helical" evidence="1">
    <location>
        <begin position="24"/>
        <end position="44"/>
    </location>
</feature>
<reference key="1">
    <citation type="journal article" date="2003" name="Proc. Natl. Acad. Sci. U.S.A.">
        <title>Complete genome sequence of the marine planctomycete Pirellula sp. strain 1.</title>
        <authorList>
            <person name="Gloeckner F.O."/>
            <person name="Kube M."/>
            <person name="Bauer M."/>
            <person name="Teeling H."/>
            <person name="Lombardot T."/>
            <person name="Ludwig W."/>
            <person name="Gade D."/>
            <person name="Beck A."/>
            <person name="Borzym K."/>
            <person name="Heitmann K."/>
            <person name="Rabus R."/>
            <person name="Schlesner H."/>
            <person name="Amann R."/>
            <person name="Reinhardt R."/>
        </authorList>
    </citation>
    <scope>NUCLEOTIDE SEQUENCE [LARGE SCALE GENOMIC DNA]</scope>
    <source>
        <strain>DSM 10527 / NCIMB 13988 / SH1</strain>
    </source>
</reference>
<sequence>MRRPMIASLLLDTLPLAQMPKVTTALLIGALVIFAGIVVVLFIFTSYFGLWIQSVLTGSKISFGNLIGMTFRKVNTRAIVRSKIMATQAGLDDPELTVGALEAHYLAGGNVQQVIRALIAAKKAKTISLTFREATAIDLAGRDVLESVQTSVYPKVIDCPPRGSAKPSLDAVAKDGIQLKVRARVTVRANLQQLIGGATEETIIARVGEGIVSAIGSADDHKAVLENPDVISKAVLVKKLDSQTAFEIVSIDIADIDVGANIGARLQADQAEADTAVARANAEGRRAAAVAEEQEMQAEIAKSQAQVVEAQSDVPRAMAEAFRSGKLLVMDYYRLQNVSADTEMRRALAGHSHDPDTPEETH</sequence>
<organism>
    <name type="scientific">Rhodopirellula baltica (strain DSM 10527 / NCIMB 13988 / SH1)</name>
    <dbReference type="NCBI Taxonomy" id="243090"/>
    <lineage>
        <taxon>Bacteria</taxon>
        <taxon>Pseudomonadati</taxon>
        <taxon>Planctomycetota</taxon>
        <taxon>Planctomycetia</taxon>
        <taxon>Pirellulales</taxon>
        <taxon>Pirellulaceae</taxon>
        <taxon>Rhodopirellula</taxon>
    </lineage>
</organism>
<accession>Q7UQD2</accession>
<comment type="function">
    <text evidence="1">Found in functional membrane microdomains (FMM) that may be equivalent to eukaryotic membrane rafts. FMMs are highly dynamic and increase in number as cells age. Flotillins are thought to be important factors in membrane fluidity.</text>
</comment>
<comment type="subunit">
    <text evidence="1">Homooligomerizes.</text>
</comment>
<comment type="subcellular location">
    <subcellularLocation>
        <location evidence="1">Cell membrane</location>
        <topology evidence="1">Single-pass membrane protein</topology>
    </subcellularLocation>
    <subcellularLocation>
        <location evidence="1">Membrane raft</location>
        <topology evidence="1">Single-pass membrane protein</topology>
    </subcellularLocation>
</comment>
<comment type="similarity">
    <text evidence="1">Belongs to the flotillin-like FloA family.</text>
</comment>
<name>FLOA2_RHOBA</name>
<gene>
    <name evidence="1" type="primary">floA2</name>
    <name type="ordered locus">RB6389</name>
</gene>
<keyword id="KW-1003">Cell membrane</keyword>
<keyword id="KW-0472">Membrane</keyword>
<keyword id="KW-1185">Reference proteome</keyword>
<keyword id="KW-0812">Transmembrane</keyword>
<keyword id="KW-1133">Transmembrane helix</keyword>
<proteinExistence type="inferred from homology"/>